<feature type="chain" id="PRO_0000345308" description="tRNA uridine 5-carboxymethylaminomethyl modification enzyme MnmG">
    <location>
        <begin position="1"/>
        <end position="625"/>
    </location>
</feature>
<feature type="binding site" evidence="1">
    <location>
        <begin position="9"/>
        <end position="14"/>
    </location>
    <ligand>
        <name>FAD</name>
        <dbReference type="ChEBI" id="CHEBI:57692"/>
    </ligand>
</feature>
<feature type="binding site" evidence="1">
    <location>
        <position position="121"/>
    </location>
    <ligand>
        <name>FAD</name>
        <dbReference type="ChEBI" id="CHEBI:57692"/>
    </ligand>
</feature>
<feature type="binding site" evidence="1">
    <location>
        <position position="176"/>
    </location>
    <ligand>
        <name>FAD</name>
        <dbReference type="ChEBI" id="CHEBI:57692"/>
    </ligand>
</feature>
<feature type="binding site" evidence="1">
    <location>
        <begin position="270"/>
        <end position="284"/>
    </location>
    <ligand>
        <name>NAD(+)</name>
        <dbReference type="ChEBI" id="CHEBI:57540"/>
    </ligand>
</feature>
<feature type="binding site" evidence="1">
    <location>
        <position position="367"/>
    </location>
    <ligand>
        <name>FAD</name>
        <dbReference type="ChEBI" id="CHEBI:57692"/>
    </ligand>
</feature>
<proteinExistence type="inferred from homology"/>
<protein>
    <recommendedName>
        <fullName evidence="1">tRNA uridine 5-carboxymethylaminomethyl modification enzyme MnmG</fullName>
    </recommendedName>
    <alternativeName>
        <fullName evidence="1">Glucose-inhibited division protein A</fullName>
    </alternativeName>
</protein>
<reference key="1">
    <citation type="journal article" date="2007" name="Proc. Natl. Acad. Sci. U.S.A.">
        <title>Deep-sea vent epsilon-proteobacterial genomes provide insights into emergence of pathogens.</title>
        <authorList>
            <person name="Nakagawa S."/>
            <person name="Takaki Y."/>
            <person name="Shimamura S."/>
            <person name="Reysenbach A.-L."/>
            <person name="Takai K."/>
            <person name="Horikoshi K."/>
        </authorList>
    </citation>
    <scope>NUCLEOTIDE SEQUENCE [LARGE SCALE GENOMIC DNA]</scope>
    <source>
        <strain>SB155-2</strain>
    </source>
</reference>
<keyword id="KW-0963">Cytoplasm</keyword>
<keyword id="KW-0274">FAD</keyword>
<keyword id="KW-0285">Flavoprotein</keyword>
<keyword id="KW-0520">NAD</keyword>
<keyword id="KW-1185">Reference proteome</keyword>
<keyword id="KW-0819">tRNA processing</keyword>
<dbReference type="EMBL" id="AP009178">
    <property type="protein sequence ID" value="BAF70694.1"/>
    <property type="molecule type" value="Genomic_DNA"/>
</dbReference>
<dbReference type="RefSeq" id="WP_012082957.1">
    <property type="nucleotide sequence ID" value="NC_009662.1"/>
</dbReference>
<dbReference type="SMR" id="A6Q5D5"/>
<dbReference type="FunCoup" id="A6Q5D5">
    <property type="interactions" value="487"/>
</dbReference>
<dbReference type="STRING" id="387092.NIS_1587"/>
<dbReference type="KEGG" id="nis:NIS_1587"/>
<dbReference type="eggNOG" id="COG0445">
    <property type="taxonomic scope" value="Bacteria"/>
</dbReference>
<dbReference type="HOGENOM" id="CLU_007831_2_2_7"/>
<dbReference type="InParanoid" id="A6Q5D5"/>
<dbReference type="OrthoDB" id="9815560at2"/>
<dbReference type="Proteomes" id="UP000001118">
    <property type="component" value="Chromosome"/>
</dbReference>
<dbReference type="GO" id="GO:0005829">
    <property type="term" value="C:cytosol"/>
    <property type="evidence" value="ECO:0007669"/>
    <property type="project" value="TreeGrafter"/>
</dbReference>
<dbReference type="GO" id="GO:0050660">
    <property type="term" value="F:flavin adenine dinucleotide binding"/>
    <property type="evidence" value="ECO:0007669"/>
    <property type="project" value="UniProtKB-UniRule"/>
</dbReference>
<dbReference type="GO" id="GO:0030488">
    <property type="term" value="P:tRNA methylation"/>
    <property type="evidence" value="ECO:0007669"/>
    <property type="project" value="TreeGrafter"/>
</dbReference>
<dbReference type="GO" id="GO:0002098">
    <property type="term" value="P:tRNA wobble uridine modification"/>
    <property type="evidence" value="ECO:0007669"/>
    <property type="project" value="InterPro"/>
</dbReference>
<dbReference type="FunFam" id="1.10.150.570:FF:000001">
    <property type="entry name" value="tRNA uridine 5-carboxymethylaminomethyl modification enzyme MnmG"/>
    <property type="match status" value="1"/>
</dbReference>
<dbReference type="FunFam" id="3.50.50.60:FF:000002">
    <property type="entry name" value="tRNA uridine 5-carboxymethylaminomethyl modification enzyme MnmG"/>
    <property type="match status" value="1"/>
</dbReference>
<dbReference type="Gene3D" id="3.50.50.60">
    <property type="entry name" value="FAD/NAD(P)-binding domain"/>
    <property type="match status" value="2"/>
</dbReference>
<dbReference type="Gene3D" id="1.10.150.570">
    <property type="entry name" value="GidA associated domain, C-terminal subdomain"/>
    <property type="match status" value="1"/>
</dbReference>
<dbReference type="Gene3D" id="1.10.10.1800">
    <property type="entry name" value="tRNA uridine 5-carboxymethylaminomethyl modification enzyme MnmG/GidA"/>
    <property type="match status" value="1"/>
</dbReference>
<dbReference type="HAMAP" id="MF_00129">
    <property type="entry name" value="MnmG_GidA"/>
    <property type="match status" value="1"/>
</dbReference>
<dbReference type="InterPro" id="IPR036188">
    <property type="entry name" value="FAD/NAD-bd_sf"/>
</dbReference>
<dbReference type="InterPro" id="IPR049312">
    <property type="entry name" value="GIDA_C_N"/>
</dbReference>
<dbReference type="InterPro" id="IPR004416">
    <property type="entry name" value="MnmG"/>
</dbReference>
<dbReference type="InterPro" id="IPR002218">
    <property type="entry name" value="MnmG-rel"/>
</dbReference>
<dbReference type="InterPro" id="IPR020595">
    <property type="entry name" value="MnmG-rel_CS"/>
</dbReference>
<dbReference type="InterPro" id="IPR026904">
    <property type="entry name" value="MnmG_C"/>
</dbReference>
<dbReference type="InterPro" id="IPR047001">
    <property type="entry name" value="MnmG_C_subdom"/>
</dbReference>
<dbReference type="InterPro" id="IPR044920">
    <property type="entry name" value="MnmG_C_subdom_sf"/>
</dbReference>
<dbReference type="InterPro" id="IPR040131">
    <property type="entry name" value="MnmG_N"/>
</dbReference>
<dbReference type="NCBIfam" id="TIGR00136">
    <property type="entry name" value="mnmG_gidA"/>
    <property type="match status" value="1"/>
</dbReference>
<dbReference type="PANTHER" id="PTHR11806">
    <property type="entry name" value="GLUCOSE INHIBITED DIVISION PROTEIN A"/>
    <property type="match status" value="1"/>
</dbReference>
<dbReference type="PANTHER" id="PTHR11806:SF0">
    <property type="entry name" value="PROTEIN MTO1 HOMOLOG, MITOCHONDRIAL"/>
    <property type="match status" value="1"/>
</dbReference>
<dbReference type="Pfam" id="PF01134">
    <property type="entry name" value="GIDA"/>
    <property type="match status" value="1"/>
</dbReference>
<dbReference type="Pfam" id="PF21680">
    <property type="entry name" value="GIDA_C_1st"/>
    <property type="match status" value="1"/>
</dbReference>
<dbReference type="Pfam" id="PF13932">
    <property type="entry name" value="SAM_GIDA_C"/>
    <property type="match status" value="1"/>
</dbReference>
<dbReference type="PRINTS" id="PR00368">
    <property type="entry name" value="FADPNR"/>
</dbReference>
<dbReference type="PRINTS" id="PR00411">
    <property type="entry name" value="PNDRDTASEI"/>
</dbReference>
<dbReference type="SMART" id="SM01228">
    <property type="entry name" value="GIDA_assoc_3"/>
    <property type="match status" value="1"/>
</dbReference>
<dbReference type="SUPFAM" id="SSF51905">
    <property type="entry name" value="FAD/NAD(P)-binding domain"/>
    <property type="match status" value="1"/>
</dbReference>
<dbReference type="PROSITE" id="PS01280">
    <property type="entry name" value="GIDA_1"/>
    <property type="match status" value="1"/>
</dbReference>
<dbReference type="PROSITE" id="PS01281">
    <property type="entry name" value="GIDA_2"/>
    <property type="match status" value="1"/>
</dbReference>
<gene>
    <name evidence="1" type="primary">mnmG</name>
    <name evidence="1" type="synonym">gidA</name>
    <name type="ordered locus">NIS_1587</name>
</gene>
<sequence length="625" mass="70131">MKFDVIVIGGGHAGIEAALASARMGMKTLMITILAEQIGAASCNPAIGGLAKGHLVKEIDALGGQMGLTTDKTGIQFRILNASKGPAVRGSRAQIDMDRYRIMMRTIVLNTPNLEVRQEMVDRLLIKGDAVVGVETNLKNVYHAKKVIVTTGTFLRGLIHIGEIKQEAGRAGEFASNALSDSLKSLGLRLGRLKTGTCARIDAKTIDFSRMEVQPGDENPIPFSFRTDRKRFNPTQLPCYITYTNERTHEIIESNFHRAPLFTGQIEGVGPRYCPSIEDKIYRFRDKERHHIFVEPQTLEATEYYINGMSTSLPPDVQLEMIRSVKGLEHAEVVRYGYAIEYDFVDPTQLKHTLETKSIKNLYCAGQINGTTGYEEAAAQGLMAGINAALAIKEQEPLILGRDEAYIGVLIDDLVTKGTKEPYRMFTSRAEFRLLLREDNADLRLMPYGHKLGLVDEETYMKMIRKKEQIEKGLDLLKNSFITPNKETLELLSSLEEGKITDKTALVNVVARPTFTMEKLEVLVPEIQEFSEEAKEQILIEAKYHQYIQMQKEQIEKMHELMNVKIPEDLDIDAISGLSNEVKEKLKAHKPPTLFAASQISGITPAAIEILHIYIKMHQKRRVTK</sequence>
<name>MNMG_NITSB</name>
<evidence type="ECO:0000255" key="1">
    <source>
        <dbReference type="HAMAP-Rule" id="MF_00129"/>
    </source>
</evidence>
<comment type="function">
    <text evidence="1">NAD-binding protein involved in the addition of a carboxymethylaminomethyl (cmnm) group at the wobble position (U34) of certain tRNAs, forming tRNA-cmnm(5)s(2)U34.</text>
</comment>
<comment type="cofactor">
    <cofactor evidence="1">
        <name>FAD</name>
        <dbReference type="ChEBI" id="CHEBI:57692"/>
    </cofactor>
</comment>
<comment type="subunit">
    <text evidence="1">Homodimer. Heterotetramer of two MnmE and two MnmG subunits.</text>
</comment>
<comment type="subcellular location">
    <subcellularLocation>
        <location evidence="1">Cytoplasm</location>
    </subcellularLocation>
</comment>
<comment type="similarity">
    <text evidence="1">Belongs to the MnmG family.</text>
</comment>
<organism>
    <name type="scientific">Nitratiruptor sp. (strain SB155-2)</name>
    <dbReference type="NCBI Taxonomy" id="387092"/>
    <lineage>
        <taxon>Bacteria</taxon>
        <taxon>Pseudomonadati</taxon>
        <taxon>Campylobacterota</taxon>
        <taxon>Epsilonproteobacteria</taxon>
        <taxon>Nautiliales</taxon>
        <taxon>Nitratiruptoraceae</taxon>
        <taxon>Nitratiruptor</taxon>
    </lineage>
</organism>
<accession>A6Q5D5</accession>